<evidence type="ECO:0000255" key="1">
    <source>
        <dbReference type="HAMAP-Rule" id="MF_00508"/>
    </source>
</evidence>
<evidence type="ECO:0000305" key="2"/>
<protein>
    <recommendedName>
        <fullName evidence="1">Small ribosomal subunit protein uS10</fullName>
    </recommendedName>
    <alternativeName>
        <fullName evidence="2">30S ribosomal protein S10</fullName>
    </alternativeName>
</protein>
<reference key="1">
    <citation type="journal article" date="2003" name="Proc. Natl. Acad. Sci. U.S.A.">
        <title>Reductive genome evolution in Buchnera aphidicola.</title>
        <authorList>
            <person name="van Ham R.C.H.J."/>
            <person name="Kamerbeek J."/>
            <person name="Palacios C."/>
            <person name="Rausell C."/>
            <person name="Abascal F."/>
            <person name="Bastolla U."/>
            <person name="Fernandez J.M."/>
            <person name="Jimenez L."/>
            <person name="Postigo M."/>
            <person name="Silva F.J."/>
            <person name="Tamames J."/>
            <person name="Viguera E."/>
            <person name="Latorre A."/>
            <person name="Valencia A."/>
            <person name="Moran F."/>
            <person name="Moya A."/>
        </authorList>
    </citation>
    <scope>NUCLEOTIDE SEQUENCE [LARGE SCALE GENOMIC DNA]</scope>
    <source>
        <strain>Bp</strain>
    </source>
</reference>
<feature type="chain" id="PRO_0000146511" description="Small ribosomal subunit protein uS10">
    <location>
        <begin position="1"/>
        <end position="104"/>
    </location>
</feature>
<comment type="function">
    <text evidence="1">Involved in the binding of tRNA to the ribosomes.</text>
</comment>
<comment type="subunit">
    <text evidence="1">Part of the 30S ribosomal subunit.</text>
</comment>
<comment type="similarity">
    <text evidence="1">Belongs to the universal ribosomal protein uS10 family.</text>
</comment>
<keyword id="KW-1185">Reference proteome</keyword>
<keyword id="KW-0687">Ribonucleoprotein</keyword>
<keyword id="KW-0689">Ribosomal protein</keyword>
<name>RS10_BUCBP</name>
<accession>Q89A67</accession>
<sequence>MQQNQRIRIRLKAFDHRLIDQSTSEIVETAKRTGAQVRGPIPLPTHKEKFTVLISPHVNKDARDQYEIRTHKRLIDIVEPTEKTVDALMRLDLAAGVDVQISLG</sequence>
<proteinExistence type="inferred from homology"/>
<dbReference type="EMBL" id="AE016826">
    <property type="protein sequence ID" value="AAO27174.1"/>
    <property type="molecule type" value="Genomic_DNA"/>
</dbReference>
<dbReference type="RefSeq" id="WP_011091575.1">
    <property type="nucleotide sequence ID" value="NC_004545.1"/>
</dbReference>
<dbReference type="SMR" id="Q89A67"/>
<dbReference type="STRING" id="224915.bbp_468"/>
<dbReference type="KEGG" id="bab:bbp_468"/>
<dbReference type="eggNOG" id="COG0051">
    <property type="taxonomic scope" value="Bacteria"/>
</dbReference>
<dbReference type="HOGENOM" id="CLU_122625_1_3_6"/>
<dbReference type="OrthoDB" id="9804464at2"/>
<dbReference type="Proteomes" id="UP000000601">
    <property type="component" value="Chromosome"/>
</dbReference>
<dbReference type="GO" id="GO:1990904">
    <property type="term" value="C:ribonucleoprotein complex"/>
    <property type="evidence" value="ECO:0007669"/>
    <property type="project" value="UniProtKB-KW"/>
</dbReference>
<dbReference type="GO" id="GO:0005840">
    <property type="term" value="C:ribosome"/>
    <property type="evidence" value="ECO:0007669"/>
    <property type="project" value="UniProtKB-KW"/>
</dbReference>
<dbReference type="GO" id="GO:0003735">
    <property type="term" value="F:structural constituent of ribosome"/>
    <property type="evidence" value="ECO:0007669"/>
    <property type="project" value="InterPro"/>
</dbReference>
<dbReference type="GO" id="GO:0000049">
    <property type="term" value="F:tRNA binding"/>
    <property type="evidence" value="ECO:0007669"/>
    <property type="project" value="UniProtKB-UniRule"/>
</dbReference>
<dbReference type="GO" id="GO:0006412">
    <property type="term" value="P:translation"/>
    <property type="evidence" value="ECO:0007669"/>
    <property type="project" value="UniProtKB-UniRule"/>
</dbReference>
<dbReference type="FunFam" id="3.30.70.600:FF:000001">
    <property type="entry name" value="30S ribosomal protein S10"/>
    <property type="match status" value="1"/>
</dbReference>
<dbReference type="Gene3D" id="3.30.70.600">
    <property type="entry name" value="Ribosomal protein S10 domain"/>
    <property type="match status" value="1"/>
</dbReference>
<dbReference type="HAMAP" id="MF_00508">
    <property type="entry name" value="Ribosomal_uS10"/>
    <property type="match status" value="1"/>
</dbReference>
<dbReference type="InterPro" id="IPR001848">
    <property type="entry name" value="Ribosomal_uS10"/>
</dbReference>
<dbReference type="InterPro" id="IPR018268">
    <property type="entry name" value="Ribosomal_uS10_CS"/>
</dbReference>
<dbReference type="InterPro" id="IPR027486">
    <property type="entry name" value="Ribosomal_uS10_dom"/>
</dbReference>
<dbReference type="InterPro" id="IPR036838">
    <property type="entry name" value="Ribosomal_uS10_dom_sf"/>
</dbReference>
<dbReference type="NCBIfam" id="NF001861">
    <property type="entry name" value="PRK00596.1"/>
    <property type="match status" value="1"/>
</dbReference>
<dbReference type="NCBIfam" id="TIGR01049">
    <property type="entry name" value="rpsJ_bact"/>
    <property type="match status" value="1"/>
</dbReference>
<dbReference type="PANTHER" id="PTHR11700">
    <property type="entry name" value="30S RIBOSOMAL PROTEIN S10 FAMILY MEMBER"/>
    <property type="match status" value="1"/>
</dbReference>
<dbReference type="Pfam" id="PF00338">
    <property type="entry name" value="Ribosomal_S10"/>
    <property type="match status" value="1"/>
</dbReference>
<dbReference type="PRINTS" id="PR00971">
    <property type="entry name" value="RIBOSOMALS10"/>
</dbReference>
<dbReference type="SMART" id="SM01403">
    <property type="entry name" value="Ribosomal_S10"/>
    <property type="match status" value="1"/>
</dbReference>
<dbReference type="SUPFAM" id="SSF54999">
    <property type="entry name" value="Ribosomal protein S10"/>
    <property type="match status" value="1"/>
</dbReference>
<dbReference type="PROSITE" id="PS00361">
    <property type="entry name" value="RIBOSOMAL_S10"/>
    <property type="match status" value="1"/>
</dbReference>
<organism>
    <name type="scientific">Buchnera aphidicola subsp. Baizongia pistaciae (strain Bp)</name>
    <dbReference type="NCBI Taxonomy" id="224915"/>
    <lineage>
        <taxon>Bacteria</taxon>
        <taxon>Pseudomonadati</taxon>
        <taxon>Pseudomonadota</taxon>
        <taxon>Gammaproteobacteria</taxon>
        <taxon>Enterobacterales</taxon>
        <taxon>Erwiniaceae</taxon>
        <taxon>Buchnera</taxon>
    </lineage>
</organism>
<gene>
    <name evidence="1" type="primary">rpsJ</name>
    <name type="ordered locus">bbp_468</name>
</gene>